<feature type="initiator methionine" description="Removed" evidence="2">
    <location>
        <position position="1"/>
    </location>
</feature>
<feature type="chain" id="PRO_0000250651" description="RNA polymerase II subunit B1 CTD phosphatase Rpap2">
    <location>
        <begin position="2"/>
        <end position="609"/>
    </location>
</feature>
<feature type="zinc finger region" description="RTR1-type" evidence="4">
    <location>
        <begin position="77"/>
        <end position="160"/>
    </location>
</feature>
<feature type="region of interest" description="Disordered" evidence="5">
    <location>
        <begin position="1"/>
        <end position="37"/>
    </location>
</feature>
<feature type="region of interest" description="Disordered" evidence="5">
    <location>
        <begin position="208"/>
        <end position="272"/>
    </location>
</feature>
<feature type="coiled-coil region" evidence="3">
    <location>
        <begin position="33"/>
        <end position="69"/>
    </location>
</feature>
<feature type="compositionally biased region" description="Polar residues" evidence="5">
    <location>
        <begin position="15"/>
        <end position="31"/>
    </location>
</feature>
<feature type="binding site" evidence="4">
    <location>
        <position position="100"/>
    </location>
    <ligand>
        <name>Zn(2+)</name>
        <dbReference type="ChEBI" id="CHEBI:29105"/>
    </ligand>
</feature>
<feature type="binding site" evidence="4">
    <location>
        <position position="105"/>
    </location>
    <ligand>
        <name>Zn(2+)</name>
        <dbReference type="ChEBI" id="CHEBI:29105"/>
    </ligand>
</feature>
<feature type="binding site" evidence="4">
    <location>
        <position position="136"/>
    </location>
    <ligand>
        <name>Zn(2+)</name>
        <dbReference type="ChEBI" id="CHEBI:29105"/>
    </ligand>
</feature>
<feature type="binding site" evidence="4">
    <location>
        <position position="140"/>
    </location>
    <ligand>
        <name>Zn(2+)</name>
        <dbReference type="ChEBI" id="CHEBI:29105"/>
    </ligand>
</feature>
<feature type="modified residue" description="N-acetylalanine" evidence="2">
    <location>
        <position position="2"/>
    </location>
</feature>
<feature type="modified residue" description="Phosphoserine" evidence="2">
    <location>
        <position position="9"/>
    </location>
</feature>
<feature type="modified residue" description="Phosphoserine" evidence="7">
    <location>
        <position position="222"/>
    </location>
</feature>
<feature type="modified residue" description="Phosphoserine" evidence="2">
    <location>
        <position position="476"/>
    </location>
</feature>
<feature type="splice variant" id="VSP_042584" description="In isoform 2." evidence="6">
    <location>
        <begin position="214"/>
        <end position="218"/>
    </location>
</feature>
<organism>
    <name type="scientific">Rattus norvegicus</name>
    <name type="common">Rat</name>
    <dbReference type="NCBI Taxonomy" id="10116"/>
    <lineage>
        <taxon>Eukaryota</taxon>
        <taxon>Metazoa</taxon>
        <taxon>Chordata</taxon>
        <taxon>Craniata</taxon>
        <taxon>Vertebrata</taxon>
        <taxon>Euteleostomi</taxon>
        <taxon>Mammalia</taxon>
        <taxon>Eutheria</taxon>
        <taxon>Euarchontoglires</taxon>
        <taxon>Glires</taxon>
        <taxon>Rodentia</taxon>
        <taxon>Myomorpha</taxon>
        <taxon>Muroidea</taxon>
        <taxon>Muridae</taxon>
        <taxon>Murinae</taxon>
        <taxon>Rattus</taxon>
    </lineage>
</organism>
<gene>
    <name type="primary">Rpap2</name>
</gene>
<keyword id="KW-0007">Acetylation</keyword>
<keyword id="KW-0025">Alternative splicing</keyword>
<keyword id="KW-0175">Coiled coil</keyword>
<keyword id="KW-0963">Cytoplasm</keyword>
<keyword id="KW-0378">Hydrolase</keyword>
<keyword id="KW-0479">Metal-binding</keyword>
<keyword id="KW-0539">Nucleus</keyword>
<keyword id="KW-0597">Phosphoprotein</keyword>
<keyword id="KW-0904">Protein phosphatase</keyword>
<keyword id="KW-1185">Reference proteome</keyword>
<keyword id="KW-0804">Transcription</keyword>
<keyword id="KW-0805">Transcription regulation</keyword>
<keyword id="KW-0862">Zinc</keyword>
<keyword id="KW-0863">Zinc-finger</keyword>
<sequence>MADSAVPYSLGPSARASSTHRVATGTKQTSALKRRDASKRQAELEAALQRKVESERRAVRLVEQLLEENITEEFLKECGMFITPAHYSDVVDERAIIKLCGYPLCQKKLGVIPKQKYRISTKTNKVYDITERKSFCSNFCYKASKFFEAQIPKTPVWVREEERPPEFQLLKKGQSGCSGEVVQFFRDAVTAADVDAYGAFDAQCEPASSSTWSERASDERASDEEGPGFVSSLLPGNRPKAVGTKPQPHRQSSTVKKKAAQKMTSKHGEQTVSEVTEQLSNCRLDSQEKVATCKLPAKKENTQISSPGPLCDRLNTSTVSENKHSVSQVTLVGISKKSAEHFRSKFAKSNPGSGSASGLVQVRPEVAKANLLRVLKDTLTEWKTDETLKFLYGQDHGSVCLQPSAASGPDEELDEDDISCQAQNTLDETLPFRGSDTAIKPLPSYESLKKETEMLNLRVREFYRGRCVLNEDSTKSQDSKENELQRDPSFPLIDSSSQNQIRRRIVLEKLSKVLPGLLGPLQITMGDIYTELKNLVQTFRLSNRNIIHKPVEWTLIAVVLLSLLTPILGIQKHSPKNVVFTQFIATLLTELHLKCEDLENLAMIFRTSC</sequence>
<accession>Q5I0E6</accession>
<accession>D4A5J9</accession>
<accession>D4A672</accession>
<reference key="1">
    <citation type="journal article" date="2004" name="Nature">
        <title>Genome sequence of the Brown Norway rat yields insights into mammalian evolution.</title>
        <authorList>
            <person name="Gibbs R.A."/>
            <person name="Weinstock G.M."/>
            <person name="Metzker M.L."/>
            <person name="Muzny D.M."/>
            <person name="Sodergren E.J."/>
            <person name="Scherer S."/>
            <person name="Scott G."/>
            <person name="Steffen D."/>
            <person name="Worley K.C."/>
            <person name="Burch P.E."/>
            <person name="Okwuonu G."/>
            <person name="Hines S."/>
            <person name="Lewis L."/>
            <person name="Deramo C."/>
            <person name="Delgado O."/>
            <person name="Dugan-Rocha S."/>
            <person name="Miner G."/>
            <person name="Morgan M."/>
            <person name="Hawes A."/>
            <person name="Gill R."/>
            <person name="Holt R.A."/>
            <person name="Adams M.D."/>
            <person name="Amanatides P.G."/>
            <person name="Baden-Tillson H."/>
            <person name="Barnstead M."/>
            <person name="Chin S."/>
            <person name="Evans C.A."/>
            <person name="Ferriera S."/>
            <person name="Fosler C."/>
            <person name="Glodek A."/>
            <person name="Gu Z."/>
            <person name="Jennings D."/>
            <person name="Kraft C.L."/>
            <person name="Nguyen T."/>
            <person name="Pfannkoch C.M."/>
            <person name="Sitter C."/>
            <person name="Sutton G.G."/>
            <person name="Venter J.C."/>
            <person name="Woodage T."/>
            <person name="Smith D."/>
            <person name="Lee H.-M."/>
            <person name="Gustafson E."/>
            <person name="Cahill P."/>
            <person name="Kana A."/>
            <person name="Doucette-Stamm L."/>
            <person name="Weinstock K."/>
            <person name="Fechtel K."/>
            <person name="Weiss R.B."/>
            <person name="Dunn D.M."/>
            <person name="Green E.D."/>
            <person name="Blakesley R.W."/>
            <person name="Bouffard G.G."/>
            <person name="De Jong P.J."/>
            <person name="Osoegawa K."/>
            <person name="Zhu B."/>
            <person name="Marra M."/>
            <person name="Schein J."/>
            <person name="Bosdet I."/>
            <person name="Fjell C."/>
            <person name="Jones S."/>
            <person name="Krzywinski M."/>
            <person name="Mathewson C."/>
            <person name="Siddiqui A."/>
            <person name="Wye N."/>
            <person name="McPherson J."/>
            <person name="Zhao S."/>
            <person name="Fraser C.M."/>
            <person name="Shetty J."/>
            <person name="Shatsman S."/>
            <person name="Geer K."/>
            <person name="Chen Y."/>
            <person name="Abramzon S."/>
            <person name="Nierman W.C."/>
            <person name="Havlak P.H."/>
            <person name="Chen R."/>
            <person name="Durbin K.J."/>
            <person name="Egan A."/>
            <person name="Ren Y."/>
            <person name="Song X.-Z."/>
            <person name="Li B."/>
            <person name="Liu Y."/>
            <person name="Qin X."/>
            <person name="Cawley S."/>
            <person name="Cooney A.J."/>
            <person name="D'Souza L.M."/>
            <person name="Martin K."/>
            <person name="Wu J.Q."/>
            <person name="Gonzalez-Garay M.L."/>
            <person name="Jackson A.R."/>
            <person name="Kalafus K.J."/>
            <person name="McLeod M.P."/>
            <person name="Milosavljevic A."/>
            <person name="Virk D."/>
            <person name="Volkov A."/>
            <person name="Wheeler D.A."/>
            <person name="Zhang Z."/>
            <person name="Bailey J.A."/>
            <person name="Eichler E.E."/>
            <person name="Tuzun E."/>
            <person name="Birney E."/>
            <person name="Mongin E."/>
            <person name="Ureta-Vidal A."/>
            <person name="Woodwark C."/>
            <person name="Zdobnov E."/>
            <person name="Bork P."/>
            <person name="Suyama M."/>
            <person name="Torrents D."/>
            <person name="Alexandersson M."/>
            <person name="Trask B.J."/>
            <person name="Young J.M."/>
            <person name="Huang H."/>
            <person name="Wang H."/>
            <person name="Xing H."/>
            <person name="Daniels S."/>
            <person name="Gietzen D."/>
            <person name="Schmidt J."/>
            <person name="Stevens K."/>
            <person name="Vitt U."/>
            <person name="Wingrove J."/>
            <person name="Camara F."/>
            <person name="Mar Alba M."/>
            <person name="Abril J.F."/>
            <person name="Guigo R."/>
            <person name="Smit A."/>
            <person name="Dubchak I."/>
            <person name="Rubin E.M."/>
            <person name="Couronne O."/>
            <person name="Poliakov A."/>
            <person name="Huebner N."/>
            <person name="Ganten D."/>
            <person name="Goesele C."/>
            <person name="Hummel O."/>
            <person name="Kreitler T."/>
            <person name="Lee Y.-A."/>
            <person name="Monti J."/>
            <person name="Schulz H."/>
            <person name="Zimdahl H."/>
            <person name="Himmelbauer H."/>
            <person name="Lehrach H."/>
            <person name="Jacob H.J."/>
            <person name="Bromberg S."/>
            <person name="Gullings-Handley J."/>
            <person name="Jensen-Seaman M.I."/>
            <person name="Kwitek A.E."/>
            <person name="Lazar J."/>
            <person name="Pasko D."/>
            <person name="Tonellato P.J."/>
            <person name="Twigger S."/>
            <person name="Ponting C.P."/>
            <person name="Duarte J.M."/>
            <person name="Rice S."/>
            <person name="Goodstadt L."/>
            <person name="Beatson S.A."/>
            <person name="Emes R.D."/>
            <person name="Winter E.E."/>
            <person name="Webber C."/>
            <person name="Brandt P."/>
            <person name="Nyakatura G."/>
            <person name="Adetobi M."/>
            <person name="Chiaromonte F."/>
            <person name="Elnitski L."/>
            <person name="Eswara P."/>
            <person name="Hardison R.C."/>
            <person name="Hou M."/>
            <person name="Kolbe D."/>
            <person name="Makova K."/>
            <person name="Miller W."/>
            <person name="Nekrutenko A."/>
            <person name="Riemer C."/>
            <person name="Schwartz S."/>
            <person name="Taylor J."/>
            <person name="Yang S."/>
            <person name="Zhang Y."/>
            <person name="Lindpaintner K."/>
            <person name="Andrews T.D."/>
            <person name="Caccamo M."/>
            <person name="Clamp M."/>
            <person name="Clarke L."/>
            <person name="Curwen V."/>
            <person name="Durbin R.M."/>
            <person name="Eyras E."/>
            <person name="Searle S.M."/>
            <person name="Cooper G.M."/>
            <person name="Batzoglou S."/>
            <person name="Brudno M."/>
            <person name="Sidow A."/>
            <person name="Stone E.A."/>
            <person name="Payseur B.A."/>
            <person name="Bourque G."/>
            <person name="Lopez-Otin C."/>
            <person name="Puente X.S."/>
            <person name="Chakrabarti K."/>
            <person name="Chatterji S."/>
            <person name="Dewey C."/>
            <person name="Pachter L."/>
            <person name="Bray N."/>
            <person name="Yap V.B."/>
            <person name="Caspi A."/>
            <person name="Tesler G."/>
            <person name="Pevzner P.A."/>
            <person name="Haussler D."/>
            <person name="Roskin K.M."/>
            <person name="Baertsch R."/>
            <person name="Clawson H."/>
            <person name="Furey T.S."/>
            <person name="Hinrichs A.S."/>
            <person name="Karolchik D."/>
            <person name="Kent W.J."/>
            <person name="Rosenbloom K.R."/>
            <person name="Trumbower H."/>
            <person name="Weirauch M."/>
            <person name="Cooper D.N."/>
            <person name="Stenson P.D."/>
            <person name="Ma B."/>
            <person name="Brent M."/>
            <person name="Arumugam M."/>
            <person name="Shteynberg D."/>
            <person name="Copley R.R."/>
            <person name="Taylor M.S."/>
            <person name="Riethman H."/>
            <person name="Mudunuri U."/>
            <person name="Peterson J."/>
            <person name="Guyer M."/>
            <person name="Felsenfeld A."/>
            <person name="Old S."/>
            <person name="Mockrin S."/>
            <person name="Collins F.S."/>
        </authorList>
    </citation>
    <scope>NUCLEOTIDE SEQUENCE [LARGE SCALE GENOMIC DNA]</scope>
    <source>
        <strain>Brown Norway</strain>
    </source>
</reference>
<reference key="2">
    <citation type="journal article" date="2004" name="Genome Res.">
        <title>The status, quality, and expansion of the NIH full-length cDNA project: the Mammalian Gene Collection (MGC).</title>
        <authorList>
            <consortium name="The MGC Project Team"/>
        </authorList>
    </citation>
    <scope>NUCLEOTIDE SEQUENCE [LARGE SCALE MRNA] (ISOFORM 1)</scope>
    <source>
        <tissue>Lung</tissue>
    </source>
</reference>
<reference key="3">
    <citation type="journal article" date="2012" name="Nat. Commun.">
        <title>Quantitative maps of protein phosphorylation sites across 14 different rat organs and tissues.</title>
        <authorList>
            <person name="Lundby A."/>
            <person name="Secher A."/>
            <person name="Lage K."/>
            <person name="Nordsborg N.B."/>
            <person name="Dmytriyev A."/>
            <person name="Lundby C."/>
            <person name="Olsen J.V."/>
        </authorList>
    </citation>
    <scope>PHOSPHORYLATION [LARGE SCALE ANALYSIS] AT SER-222</scope>
    <scope>IDENTIFICATION BY MASS SPECTROMETRY [LARGE SCALE ANALYSIS]</scope>
</reference>
<dbReference type="EC" id="3.1.3.16" evidence="2"/>
<dbReference type="EMBL" id="BC088426">
    <property type="protein sequence ID" value="AAH88426.1"/>
    <property type="molecule type" value="mRNA"/>
</dbReference>
<dbReference type="RefSeq" id="NP_001014009.1">
    <molecule id="Q5I0E6-1"/>
    <property type="nucleotide sequence ID" value="NM_001013987.1"/>
</dbReference>
<dbReference type="SMR" id="Q5I0E6"/>
<dbReference type="FunCoup" id="Q5I0E6">
    <property type="interactions" value="2969"/>
</dbReference>
<dbReference type="STRING" id="10116.ENSRNOP00000002815"/>
<dbReference type="iPTMnet" id="Q5I0E6"/>
<dbReference type="PhosphoSitePlus" id="Q5I0E6"/>
<dbReference type="PaxDb" id="10116-ENSRNOP00000002815"/>
<dbReference type="GeneID" id="305120"/>
<dbReference type="KEGG" id="rno:305120"/>
<dbReference type="UCSC" id="RGD:1309034">
    <molecule id="Q5I0E6-1"/>
    <property type="organism name" value="rat"/>
</dbReference>
<dbReference type="AGR" id="RGD:1309034"/>
<dbReference type="CTD" id="79871"/>
<dbReference type="RGD" id="1309034">
    <property type="gene designation" value="Rpap2"/>
</dbReference>
<dbReference type="VEuPathDB" id="HostDB:ENSRNOG00000023484"/>
<dbReference type="eggNOG" id="KOG4780">
    <property type="taxonomic scope" value="Eukaryota"/>
</dbReference>
<dbReference type="HOGENOM" id="CLU_019258_1_0_1"/>
<dbReference type="InParanoid" id="Q5I0E6"/>
<dbReference type="OrthoDB" id="2590500at2759"/>
<dbReference type="PhylomeDB" id="Q5I0E6"/>
<dbReference type="TreeFam" id="TF331431"/>
<dbReference type="Reactome" id="R-RNO-6807505">
    <property type="pathway name" value="RNA polymerase II transcribes snRNA genes"/>
</dbReference>
<dbReference type="PRO" id="PR:Q5I0E6"/>
<dbReference type="Proteomes" id="UP000002494">
    <property type="component" value="Chromosome 14"/>
</dbReference>
<dbReference type="Bgee" id="ENSRNOG00000023484">
    <property type="expression patterns" value="Expressed in thymus and 20 other cell types or tissues"/>
</dbReference>
<dbReference type="GO" id="GO:0005737">
    <property type="term" value="C:cytoplasm"/>
    <property type="evidence" value="ECO:0000250"/>
    <property type="project" value="UniProtKB"/>
</dbReference>
<dbReference type="GO" id="GO:0005634">
    <property type="term" value="C:nucleus"/>
    <property type="evidence" value="ECO:0000250"/>
    <property type="project" value="UniProtKB"/>
</dbReference>
<dbReference type="GO" id="GO:0097550">
    <property type="term" value="C:transcription preinitiation complex"/>
    <property type="evidence" value="ECO:0000250"/>
    <property type="project" value="UniProtKB"/>
</dbReference>
<dbReference type="GO" id="GO:0004722">
    <property type="term" value="F:protein serine/threonine phosphatase activity"/>
    <property type="evidence" value="ECO:0000250"/>
    <property type="project" value="UniProtKB"/>
</dbReference>
<dbReference type="GO" id="GO:0043175">
    <property type="term" value="F:RNA polymerase core enzyme binding"/>
    <property type="evidence" value="ECO:0007669"/>
    <property type="project" value="InterPro"/>
</dbReference>
<dbReference type="GO" id="GO:0008420">
    <property type="term" value="F:RNA polymerase II CTD heptapeptide repeat phosphatase activity"/>
    <property type="evidence" value="ECO:0000250"/>
    <property type="project" value="UniProtKB"/>
</dbReference>
<dbReference type="GO" id="GO:0008270">
    <property type="term" value="F:zinc ion binding"/>
    <property type="evidence" value="ECO:0007669"/>
    <property type="project" value="UniProtKB-KW"/>
</dbReference>
<dbReference type="GO" id="GO:0036499">
    <property type="term" value="P:PERK-mediated unfolded protein response"/>
    <property type="evidence" value="ECO:0000250"/>
    <property type="project" value="UniProtKB"/>
</dbReference>
<dbReference type="GO" id="GO:0009301">
    <property type="term" value="P:snRNA transcription"/>
    <property type="evidence" value="ECO:0000250"/>
    <property type="project" value="UniProtKB"/>
</dbReference>
<dbReference type="FunFam" id="1.25.40.820:FF:000001">
    <property type="entry name" value="RNA polymerase II subunit B1 CTD phosphatase Rpap2"/>
    <property type="match status" value="1"/>
</dbReference>
<dbReference type="Gene3D" id="1.25.40.820">
    <property type="match status" value="1"/>
</dbReference>
<dbReference type="InterPro" id="IPR039693">
    <property type="entry name" value="Rtr1/RPAP2"/>
</dbReference>
<dbReference type="InterPro" id="IPR007308">
    <property type="entry name" value="Rtr1/RPAP2_dom"/>
</dbReference>
<dbReference type="InterPro" id="IPR038534">
    <property type="entry name" value="Rtr1/RPAP2_sf"/>
</dbReference>
<dbReference type="PANTHER" id="PTHR14732">
    <property type="entry name" value="RNA POLYMERASE II SUBUNIT B1 CTD PHOSPHATASE RPAP2-RELATED"/>
    <property type="match status" value="1"/>
</dbReference>
<dbReference type="PANTHER" id="PTHR14732:SF0">
    <property type="entry name" value="RNA POLYMERASE II SUBUNIT B1 CTD PHOSPHATASE RPAP2-RELATED"/>
    <property type="match status" value="1"/>
</dbReference>
<dbReference type="Pfam" id="PF04181">
    <property type="entry name" value="RPAP2_Rtr1"/>
    <property type="match status" value="1"/>
</dbReference>
<dbReference type="PROSITE" id="PS51479">
    <property type="entry name" value="ZF_RTR1"/>
    <property type="match status" value="1"/>
</dbReference>
<proteinExistence type="evidence at protein level"/>
<protein>
    <recommendedName>
        <fullName>RNA polymerase II subunit B1 CTD phosphatase Rpap2</fullName>
        <ecNumber evidence="2">3.1.3.16</ecNumber>
    </recommendedName>
    <alternativeName>
        <fullName>Putative RNA polymerase II-associated protein 2</fullName>
    </alternativeName>
</protein>
<name>RPAP2_RAT</name>
<comment type="function">
    <text evidence="2">Protein phosphatase that displays CTD phosphatase activity and regulates transcription of snRNA genes. Recognizes and binds phosphorylated 'Ser-7' of the C-terminal heptapeptide repeat domain (CTD) of the largest RNA polymerase II subunit POLR2A, and mediates dephosphorylation of 'Ser-5' of the CTD, thereby promoting transcription of snRNA genes (By similarity). Downstream of EIF2AK3/PERK, dephosphorylates ERN1, a sensor for the endoplasmic reticulum unfolded protein response (UPR), to abort failed ER-stress adaptation and trigger apoptosis (By similarity).</text>
</comment>
<comment type="catalytic activity">
    <reaction evidence="2">
        <text>O-phospho-L-seryl-[protein] + H2O = L-seryl-[protein] + phosphate</text>
        <dbReference type="Rhea" id="RHEA:20629"/>
        <dbReference type="Rhea" id="RHEA-COMP:9863"/>
        <dbReference type="Rhea" id="RHEA-COMP:11604"/>
        <dbReference type="ChEBI" id="CHEBI:15377"/>
        <dbReference type="ChEBI" id="CHEBI:29999"/>
        <dbReference type="ChEBI" id="CHEBI:43474"/>
        <dbReference type="ChEBI" id="CHEBI:83421"/>
        <dbReference type="EC" id="3.1.3.16"/>
    </reaction>
</comment>
<comment type="catalytic activity">
    <reaction>
        <text>O-phospho-L-threonyl-[protein] + H2O = L-threonyl-[protein] + phosphate</text>
        <dbReference type="Rhea" id="RHEA:47004"/>
        <dbReference type="Rhea" id="RHEA-COMP:11060"/>
        <dbReference type="Rhea" id="RHEA-COMP:11605"/>
        <dbReference type="ChEBI" id="CHEBI:15377"/>
        <dbReference type="ChEBI" id="CHEBI:30013"/>
        <dbReference type="ChEBI" id="CHEBI:43474"/>
        <dbReference type="ChEBI" id="CHEBI:61977"/>
        <dbReference type="EC" id="3.1.3.16"/>
    </reaction>
</comment>
<comment type="subunit">
    <text evidence="1">Associates with the RNA polymerase II complex. Interacts with transcribing RNA polymerase II phosphorylated on 'Ser-7' on CTD (By similarity).</text>
</comment>
<comment type="subcellular location">
    <subcellularLocation>
        <location evidence="1">Cytoplasm</location>
    </subcellularLocation>
    <subcellularLocation>
        <location evidence="1">Nucleus</location>
    </subcellularLocation>
    <text evidence="1">Shuttles between the cytoplasm and the nucleus in a CRM1-dependent manner.</text>
</comment>
<comment type="alternative products">
    <event type="alternative splicing"/>
    <isoform>
        <id>Q5I0E6-1</id>
        <name>1</name>
        <sequence type="displayed"/>
    </isoform>
    <isoform>
        <id>Q5I0E6-2</id>
        <name>2</name>
        <sequence type="described" ref="VSP_042584"/>
    </isoform>
</comment>
<comment type="similarity">
    <text evidence="4 6">Belongs to the RPAP2 family.</text>
</comment>
<evidence type="ECO:0000250" key="1"/>
<evidence type="ECO:0000250" key="2">
    <source>
        <dbReference type="UniProtKB" id="Q8IXW5"/>
    </source>
</evidence>
<evidence type="ECO:0000255" key="3"/>
<evidence type="ECO:0000255" key="4">
    <source>
        <dbReference type="PROSITE-ProRule" id="PRU00812"/>
    </source>
</evidence>
<evidence type="ECO:0000256" key="5">
    <source>
        <dbReference type="SAM" id="MobiDB-lite"/>
    </source>
</evidence>
<evidence type="ECO:0000305" key="6"/>
<evidence type="ECO:0007744" key="7">
    <source>
    </source>
</evidence>